<sequence>MSVIDKTSSAVNPLREKVTTACAKKLYNDKDCIKIADFITPLVEDMNLDSNVDRKLHNKLERYELRLNKEYLSEFEKINNIVQKFDELCVKMNSTCTNLSKQMETVKFKSVDLVQKTASLKEKKASIESRCNMINEFLENYSLSSEELRELDECEQSGHLSEFFFKVLERCHEIRENCRNMVQEQGHLAAFEVMEKMQKIDERSHAIICNNLKREFQNLTVDSHQKKQILSKAFKIISQNDAVFQLAIDQYISSRSQELLNQFVEINKMAVQMPEGLAEPLKAVGDMLTSIHELTEQEKQLFSSICSAENLPIVLDECLKSLTSPFKIRVEQLLSTEKNAITIFKMGNILIFYANKFETLIRKDSYFTIMLADLVKTVRQVCIAGINHHVDGLMRKMTSPHYDLLPVPEVRQCLSLYHGLISIAVKTGDLNLLLEPERIYEYVLEPLIQTVQLSATRLKSDIEVSVFTINCLTVIRSAISEISAFKKKIEMIDAMIEGNSDVLVSVQVSEMLEKSGILELYQKFNAVNPAEKKPLSTLPGLESTTVGEAIVMFTQYLHNHASSDHTYDIDQQILASEERQRIRERNTLEFLKVYKMIVDRLGNPTNGYENLHYLPIEHVESVLKFEKEKENTPSSNESESLA</sequence>
<protein>
    <recommendedName>
        <fullName>Conserved oligomeric Golgi complex subunit 6</fullName>
        <shortName>COG complex subunit 6</shortName>
    </recommendedName>
    <alternativeName>
        <fullName>Component of oligomeric Golgi complex 6</fullName>
    </alternativeName>
</protein>
<feature type="chain" id="PRO_0000213515" description="Conserved oligomeric Golgi complex subunit 6">
    <location>
        <begin position="1"/>
        <end position="642"/>
    </location>
</feature>
<reference key="1">
    <citation type="journal article" date="1998" name="Science">
        <title>Genome sequence of the nematode C. elegans: a platform for investigating biology.</title>
        <authorList>
            <consortium name="The C. elegans sequencing consortium"/>
        </authorList>
    </citation>
    <scope>NUCLEOTIDE SEQUENCE [LARGE SCALE GENOMIC DNA]</scope>
    <source>
        <strain>Bristol N2</strain>
    </source>
</reference>
<dbReference type="EMBL" id="FO080570">
    <property type="protein sequence ID" value="CCD64764.1"/>
    <property type="molecule type" value="Genomic_DNA"/>
</dbReference>
<dbReference type="PIR" id="C89124">
    <property type="entry name" value="C89124"/>
</dbReference>
<dbReference type="RefSeq" id="NP_505118.1">
    <property type="nucleotide sequence ID" value="NM_072717.5"/>
</dbReference>
<dbReference type="SMR" id="Q21270"/>
<dbReference type="BioGRID" id="44243">
    <property type="interactions" value="6"/>
</dbReference>
<dbReference type="FunCoup" id="Q21270">
    <property type="interactions" value="2520"/>
</dbReference>
<dbReference type="IntAct" id="Q21270">
    <property type="interactions" value="2"/>
</dbReference>
<dbReference type="STRING" id="6239.K07C11.9.1"/>
<dbReference type="PaxDb" id="6239-K07C11.9"/>
<dbReference type="PeptideAtlas" id="Q21270"/>
<dbReference type="EnsemblMetazoa" id="K07C11.9.1">
    <property type="protein sequence ID" value="K07C11.9.1"/>
    <property type="gene ID" value="WBGene00019481"/>
</dbReference>
<dbReference type="GeneID" id="179201"/>
<dbReference type="KEGG" id="cel:CELE_K07C11.9"/>
<dbReference type="UCSC" id="K07C11.9">
    <property type="organism name" value="c. elegans"/>
</dbReference>
<dbReference type="AGR" id="WB:WBGene00019481"/>
<dbReference type="CTD" id="179201"/>
<dbReference type="WormBase" id="K07C11.9">
    <property type="protein sequence ID" value="CE07351"/>
    <property type="gene ID" value="WBGene00019481"/>
    <property type="gene designation" value="cogc-6"/>
</dbReference>
<dbReference type="eggNOG" id="KOG3758">
    <property type="taxonomic scope" value="Eukaryota"/>
</dbReference>
<dbReference type="GeneTree" id="ENSGT00390000013518"/>
<dbReference type="HOGENOM" id="CLU_426569_0_0_1"/>
<dbReference type="InParanoid" id="Q21270"/>
<dbReference type="OMA" id="HSCLDFF"/>
<dbReference type="OrthoDB" id="272987at2759"/>
<dbReference type="PhylomeDB" id="Q21270"/>
<dbReference type="Reactome" id="R-CEL-6807878">
    <property type="pathway name" value="COPI-mediated anterograde transport"/>
</dbReference>
<dbReference type="Reactome" id="R-CEL-6811438">
    <property type="pathway name" value="Intra-Golgi traffic"/>
</dbReference>
<dbReference type="PRO" id="PR:Q21270"/>
<dbReference type="Proteomes" id="UP000001940">
    <property type="component" value="Chromosome V"/>
</dbReference>
<dbReference type="Bgee" id="WBGene00019481">
    <property type="expression patterns" value="Expressed in germ line (C elegans) and 4 other cell types or tissues"/>
</dbReference>
<dbReference type="GO" id="GO:0000139">
    <property type="term" value="C:Golgi membrane"/>
    <property type="evidence" value="ECO:0007669"/>
    <property type="project" value="UniProtKB-SubCell"/>
</dbReference>
<dbReference type="GO" id="GO:0017119">
    <property type="term" value="C:Golgi transport complex"/>
    <property type="evidence" value="ECO:0000318"/>
    <property type="project" value="GO_Central"/>
</dbReference>
<dbReference type="GO" id="GO:0035262">
    <property type="term" value="P:gonad morphogenesis"/>
    <property type="evidence" value="ECO:0000315"/>
    <property type="project" value="WormBase"/>
</dbReference>
<dbReference type="GO" id="GO:0006891">
    <property type="term" value="P:intra-Golgi vesicle-mediated transport"/>
    <property type="evidence" value="ECO:0000318"/>
    <property type="project" value="GO_Central"/>
</dbReference>
<dbReference type="GO" id="GO:0015031">
    <property type="term" value="P:protein transport"/>
    <property type="evidence" value="ECO:0007669"/>
    <property type="project" value="UniProtKB-KW"/>
</dbReference>
<dbReference type="GO" id="GO:0030334">
    <property type="term" value="P:regulation of cell migration"/>
    <property type="evidence" value="ECO:0000315"/>
    <property type="project" value="WormBase"/>
</dbReference>
<dbReference type="InterPro" id="IPR010490">
    <property type="entry name" value="COG6"/>
</dbReference>
<dbReference type="InterPro" id="IPR048369">
    <property type="entry name" value="COG6_C"/>
</dbReference>
<dbReference type="InterPro" id="IPR048368">
    <property type="entry name" value="COG6_N"/>
</dbReference>
<dbReference type="PANTHER" id="PTHR21506">
    <property type="entry name" value="COMPONENT OF OLIGOMERIC GOLGI COMPLEX 6"/>
    <property type="match status" value="1"/>
</dbReference>
<dbReference type="PANTHER" id="PTHR21506:SF0">
    <property type="entry name" value="CONSERVED OLIGOMERIC GOLGI COMPLEX SUBUNIT 6"/>
    <property type="match status" value="1"/>
</dbReference>
<dbReference type="Pfam" id="PF20653">
    <property type="entry name" value="COG6_C"/>
    <property type="match status" value="1"/>
</dbReference>
<dbReference type="Pfam" id="PF06419">
    <property type="entry name" value="COG6_N"/>
    <property type="match status" value="1"/>
</dbReference>
<dbReference type="SMART" id="SM01087">
    <property type="entry name" value="COG6"/>
    <property type="match status" value="1"/>
</dbReference>
<proteinExistence type="inferred from homology"/>
<gene>
    <name type="primary">cogc-6</name>
    <name type="ORF">K07C11.9</name>
</gene>
<organism>
    <name type="scientific">Caenorhabditis elegans</name>
    <dbReference type="NCBI Taxonomy" id="6239"/>
    <lineage>
        <taxon>Eukaryota</taxon>
        <taxon>Metazoa</taxon>
        <taxon>Ecdysozoa</taxon>
        <taxon>Nematoda</taxon>
        <taxon>Chromadorea</taxon>
        <taxon>Rhabditida</taxon>
        <taxon>Rhabditina</taxon>
        <taxon>Rhabditomorpha</taxon>
        <taxon>Rhabditoidea</taxon>
        <taxon>Rhabditidae</taxon>
        <taxon>Peloderinae</taxon>
        <taxon>Caenorhabditis</taxon>
    </lineage>
</organism>
<accession>Q21270</accession>
<comment type="function">
    <text evidence="1">Required for normal Golgi function.</text>
</comment>
<comment type="subunit">
    <text evidence="1">Component of the conserved oligomeric Golgi complex which is composed of eight different subunits and is required for normal Golgi morphology and localization.</text>
</comment>
<comment type="subcellular location">
    <subcellularLocation>
        <location evidence="1">Golgi apparatus membrane</location>
        <topology evidence="1">Peripheral membrane protein</topology>
    </subcellularLocation>
</comment>
<comment type="similarity">
    <text evidence="2">Belongs to the COG6 family.</text>
</comment>
<keyword id="KW-0333">Golgi apparatus</keyword>
<keyword id="KW-0472">Membrane</keyword>
<keyword id="KW-0653">Protein transport</keyword>
<keyword id="KW-1185">Reference proteome</keyword>
<keyword id="KW-0813">Transport</keyword>
<evidence type="ECO:0000250" key="1"/>
<evidence type="ECO:0000305" key="2"/>
<name>COG6_CAEEL</name>